<reference key="1">
    <citation type="journal article" date="1982" name="EMBO J.">
        <title>The region of mouse mammary tumor virus DNA containing the long terminal repeat includes a long coding sequence and signals for hormonally regulated transcription.</title>
        <authorList>
            <person name="Fasel N."/>
            <person name="Pearson K."/>
            <person name="Buetti E."/>
            <person name="Diggelmann H."/>
        </authorList>
    </citation>
    <scope>NUCLEOTIDE SEQUENCE [GENOMIC DNA]</scope>
</reference>
<sequence length="320" mass="36969">MPRLQQKWLNSRECPTLRGEAAKGLFPTKDDPSAHKRMSPSDKDILILCCKLGIALLCLGLLGEVAVRARRALTLDSFNNNSSVQDYNLNDSENSTFLLGQGPQPTSSYKPHRICPLEIEIRMLAKKYIFTNKTNPIGRLLVTMLRNESLSFSTIFTQIQKLEMGIENRKRRSKSIEEQVQGLLASGLEVKKGKKSVFVKIGDRWWQPRTYRGPYIYRPTDAPLPYTGRYDLNWDRWVTINGYKVLYRSLPFRERLARARPPWCMLTEKEKDDMKQQVHDYIYLGTGMHFWGKVFHTKEGAVAGLIEHYSAKTYGMSYYD</sequence>
<proteinExistence type="inferred from homology"/>
<name>PR73_MMTVG</name>
<organismHost>
    <name type="scientific">Mus musculus</name>
    <name type="common">Mouse</name>
    <dbReference type="NCBI Taxonomy" id="10090"/>
</organismHost>
<accession>P03320</accession>
<feature type="chain" id="PRO_0000125502" description="Protein PR73">
    <location>
        <begin position="1"/>
        <end position="320"/>
    </location>
</feature>
<feature type="topological domain" description="Cytoplasmic" evidence="2">
    <location>
        <begin position="1"/>
        <end position="44"/>
    </location>
</feature>
<feature type="transmembrane region" description="Helical" evidence="2">
    <location>
        <begin position="45"/>
        <end position="65"/>
    </location>
</feature>
<feature type="topological domain" description="Extracellular" evidence="2">
    <location>
        <begin position="66"/>
        <end position="320"/>
    </location>
</feature>
<feature type="glycosylation site" description="N-linked (GlcNAc...) asparagine; by host" evidence="2">
    <location>
        <position position="80"/>
    </location>
</feature>
<feature type="glycosylation site" description="N-linked (GlcNAc...) asparagine; by host" evidence="2">
    <location>
        <position position="81"/>
    </location>
</feature>
<feature type="glycosylation site" description="N-linked (GlcNAc...) asparagine; by host" evidence="2">
    <location>
        <position position="90"/>
    </location>
</feature>
<feature type="glycosylation site" description="N-linked (GlcNAc...) asparagine; by host" evidence="2">
    <location>
        <position position="94"/>
    </location>
</feature>
<feature type="glycosylation site" description="N-linked (GlcNAc...) asparagine; by host" evidence="2">
    <location>
        <position position="132"/>
    </location>
</feature>
<feature type="glycosylation site" description="N-linked (GlcNAc...) asparagine; by host" evidence="2">
    <location>
        <position position="147"/>
    </location>
</feature>
<dbReference type="EMBL" id="V01175">
    <property type="protein sequence ID" value="CAA24500.1"/>
    <property type="molecule type" value="Genomic_DNA"/>
</dbReference>
<dbReference type="PIR" id="A03920">
    <property type="entry name" value="QQEV3M"/>
</dbReference>
<dbReference type="GO" id="GO:0016020">
    <property type="term" value="C:membrane"/>
    <property type="evidence" value="ECO:0007669"/>
    <property type="project" value="UniProtKB-SubCell"/>
</dbReference>
<dbReference type="InterPro" id="IPR001213">
    <property type="entry name" value="MMTV_SAg"/>
</dbReference>
<dbReference type="Pfam" id="PF01054">
    <property type="entry name" value="MMTV_SAg"/>
    <property type="match status" value="1"/>
</dbReference>
<comment type="function">
    <text evidence="1">Superantigen.</text>
</comment>
<comment type="subcellular location">
    <subcellularLocation>
        <location evidence="3">Membrane</location>
        <topology evidence="3">Single-pass type II membrane protein</topology>
    </subcellularLocation>
</comment>
<comment type="miscellaneous">
    <text>This protein is coded in the long terminal repeat (LTR).</text>
</comment>
<comment type="similarity">
    <text evidence="3">Belongs to the mouse mammary tumor virus PR73 superantigen family.</text>
</comment>
<evidence type="ECO:0000250" key="1"/>
<evidence type="ECO:0000255" key="2"/>
<evidence type="ECO:0000305" key="3"/>
<protein>
    <recommendedName>
        <fullName>Protein PR73</fullName>
    </recommendedName>
</protein>
<keyword id="KW-0325">Glycoprotein</keyword>
<keyword id="KW-0472">Membrane</keyword>
<keyword id="KW-0735">Signal-anchor</keyword>
<keyword id="KW-0766">Superantigen</keyword>
<keyword id="KW-0812">Transmembrane</keyword>
<keyword id="KW-1133">Transmembrane helix</keyword>
<organism>
    <name type="scientific">Mouse mammary tumor virus (strain GR)</name>
    <name type="common">MMTV</name>
    <dbReference type="NCBI Taxonomy" id="11760"/>
    <lineage>
        <taxon>Viruses</taxon>
        <taxon>Riboviria</taxon>
        <taxon>Pararnavirae</taxon>
        <taxon>Artverviricota</taxon>
        <taxon>Revtraviricetes</taxon>
        <taxon>Ortervirales</taxon>
        <taxon>Retroviridae</taxon>
        <taxon>Orthoretrovirinae</taxon>
        <taxon>Betaretrovirus</taxon>
        <taxon>Mouse mammary tumor virus</taxon>
    </lineage>
</organism>